<keyword id="KW-0408">Iron</keyword>
<keyword id="KW-0479">Metal-binding</keyword>
<organism>
    <name type="scientific">Pseudomonas putida (strain GB-1)</name>
    <dbReference type="NCBI Taxonomy" id="76869"/>
    <lineage>
        <taxon>Bacteria</taxon>
        <taxon>Pseudomonadati</taxon>
        <taxon>Pseudomonadota</taxon>
        <taxon>Gammaproteobacteria</taxon>
        <taxon>Pseudomonadales</taxon>
        <taxon>Pseudomonadaceae</taxon>
        <taxon>Pseudomonas</taxon>
    </lineage>
</organism>
<accession>B0KQ38</accession>
<gene>
    <name evidence="1" type="primary">cyaY</name>
    <name type="ordered locus">PputGB1_5286</name>
</gene>
<dbReference type="EMBL" id="CP000926">
    <property type="protein sequence ID" value="ABZ01168.1"/>
    <property type="molecule type" value="Genomic_DNA"/>
</dbReference>
<dbReference type="RefSeq" id="WP_012274777.1">
    <property type="nucleotide sequence ID" value="NC_010322.1"/>
</dbReference>
<dbReference type="SMR" id="B0KQ38"/>
<dbReference type="KEGG" id="ppg:PputGB1_5286"/>
<dbReference type="eggNOG" id="COG1965">
    <property type="taxonomic scope" value="Bacteria"/>
</dbReference>
<dbReference type="HOGENOM" id="CLU_080880_3_0_6"/>
<dbReference type="Proteomes" id="UP000002157">
    <property type="component" value="Chromosome"/>
</dbReference>
<dbReference type="GO" id="GO:0005829">
    <property type="term" value="C:cytosol"/>
    <property type="evidence" value="ECO:0007669"/>
    <property type="project" value="TreeGrafter"/>
</dbReference>
<dbReference type="GO" id="GO:0008199">
    <property type="term" value="F:ferric iron binding"/>
    <property type="evidence" value="ECO:0007669"/>
    <property type="project" value="InterPro"/>
</dbReference>
<dbReference type="GO" id="GO:0008198">
    <property type="term" value="F:ferrous iron binding"/>
    <property type="evidence" value="ECO:0007669"/>
    <property type="project" value="TreeGrafter"/>
</dbReference>
<dbReference type="GO" id="GO:0016226">
    <property type="term" value="P:iron-sulfur cluster assembly"/>
    <property type="evidence" value="ECO:0007669"/>
    <property type="project" value="UniProtKB-UniRule"/>
</dbReference>
<dbReference type="Gene3D" id="3.30.920.10">
    <property type="entry name" value="Frataxin/CyaY"/>
    <property type="match status" value="1"/>
</dbReference>
<dbReference type="HAMAP" id="MF_00142">
    <property type="entry name" value="CyaY"/>
    <property type="match status" value="1"/>
</dbReference>
<dbReference type="InterPro" id="IPR047584">
    <property type="entry name" value="CyaY"/>
</dbReference>
<dbReference type="InterPro" id="IPR002908">
    <property type="entry name" value="Frataxin/CyaY"/>
</dbReference>
<dbReference type="InterPro" id="IPR036524">
    <property type="entry name" value="Frataxin/CyaY_sf"/>
</dbReference>
<dbReference type="InterPro" id="IPR020895">
    <property type="entry name" value="Frataxin_CS"/>
</dbReference>
<dbReference type="NCBIfam" id="TIGR03421">
    <property type="entry name" value="FeS_CyaY"/>
    <property type="match status" value="1"/>
</dbReference>
<dbReference type="PANTHER" id="PTHR16821">
    <property type="entry name" value="FRATAXIN"/>
    <property type="match status" value="1"/>
</dbReference>
<dbReference type="PANTHER" id="PTHR16821:SF2">
    <property type="entry name" value="FRATAXIN, MITOCHONDRIAL"/>
    <property type="match status" value="1"/>
</dbReference>
<dbReference type="Pfam" id="PF01491">
    <property type="entry name" value="Frataxin_Cyay"/>
    <property type="match status" value="1"/>
</dbReference>
<dbReference type="SMART" id="SM01219">
    <property type="entry name" value="Frataxin_Cyay"/>
    <property type="match status" value="1"/>
</dbReference>
<dbReference type="SUPFAM" id="SSF55387">
    <property type="entry name" value="Frataxin/Nqo15-like"/>
    <property type="match status" value="1"/>
</dbReference>
<dbReference type="PROSITE" id="PS01344">
    <property type="entry name" value="FRATAXIN_1"/>
    <property type="match status" value="1"/>
</dbReference>
<dbReference type="PROSITE" id="PS50810">
    <property type="entry name" value="FRATAXIN_2"/>
    <property type="match status" value="1"/>
</dbReference>
<comment type="function">
    <text evidence="1">Involved in iron-sulfur (Fe-S) cluster assembly. May act as a regulator of Fe-S biogenesis.</text>
</comment>
<comment type="similarity">
    <text evidence="1">Belongs to the frataxin family.</text>
</comment>
<name>CYAY_PSEPG</name>
<reference key="1">
    <citation type="submission" date="2008-01" db="EMBL/GenBank/DDBJ databases">
        <title>Complete sequence of Pseudomonas putida GB-1.</title>
        <authorList>
            <consortium name="US DOE Joint Genome Institute"/>
            <person name="Copeland A."/>
            <person name="Lucas S."/>
            <person name="Lapidus A."/>
            <person name="Barry K."/>
            <person name="Glavina del Rio T."/>
            <person name="Dalin E."/>
            <person name="Tice H."/>
            <person name="Pitluck S."/>
            <person name="Bruce D."/>
            <person name="Goodwin L."/>
            <person name="Chertkov O."/>
            <person name="Brettin T."/>
            <person name="Detter J.C."/>
            <person name="Han C."/>
            <person name="Kuske C.R."/>
            <person name="Schmutz J."/>
            <person name="Larimer F."/>
            <person name="Land M."/>
            <person name="Hauser L."/>
            <person name="Kyrpides N."/>
            <person name="Kim E."/>
            <person name="McCarthy J.K."/>
            <person name="Richardson P."/>
        </authorList>
    </citation>
    <scope>NUCLEOTIDE SEQUENCE [LARGE SCALE GENOMIC DNA]</scope>
    <source>
        <strain>GB-1</strain>
    </source>
</reference>
<proteinExistence type="inferred from homology"/>
<protein>
    <recommendedName>
        <fullName evidence="1">Iron-sulfur cluster assembly protein CyaY</fullName>
    </recommendedName>
</protein>
<feature type="chain" id="PRO_1000076547" description="Iron-sulfur cluster assembly protein CyaY">
    <location>
        <begin position="1"/>
        <end position="110"/>
    </location>
</feature>
<sequence length="110" mass="12706">MSLSEARFHDLVDATQQALEDLFDESGMDLDMENSAGVLTVKFEGGAQLIFSRQEPLRQLWLADRSGGFHFDYDEESKKWVCEKSEELLGEMLERIVWERAGEKLDFDEI</sequence>
<evidence type="ECO:0000255" key="1">
    <source>
        <dbReference type="HAMAP-Rule" id="MF_00142"/>
    </source>
</evidence>